<sequence length="59" mass="6620">LQHRTFCKLPAEPGPCKASIPAFYYNWAAKKCQLFHYGGCKGNANRFSTIEKCRHACVG</sequence>
<feature type="chain" id="PRO_0000016865" description="Kunitz-type serine protease inhibitor long epsilon-dendrotoxin His55">
    <location>
        <begin position="1"/>
        <end position="59"/>
    </location>
</feature>
<feature type="chain" id="PRO_0000016866" description="Kunitz-type serine protease inhibitor short epsilon-dendrotoxin His55">
    <location>
        <begin position="3"/>
        <end position="59"/>
    </location>
</feature>
<feature type="domain" description="BPTI/Kunitz inhibitor" evidence="3">
    <location>
        <begin position="7"/>
        <end position="57"/>
    </location>
</feature>
<feature type="site" description="Reactive bond for trypsin" evidence="1">
    <location>
        <begin position="17"/>
        <end position="18"/>
    </location>
</feature>
<feature type="disulfide bond" evidence="3">
    <location>
        <begin position="7"/>
        <end position="57"/>
    </location>
</feature>
<feature type="disulfide bond" evidence="3">
    <location>
        <begin position="16"/>
        <end position="40"/>
    </location>
</feature>
<feature type="disulfide bond" evidence="3">
    <location>
        <begin position="32"/>
        <end position="53"/>
    </location>
</feature>
<accession>Q7LZE3</accession>
<proteinExistence type="evidence at protein level"/>
<comment type="function">
    <text evidence="2">Serine protease inhibitor that inhibits trypsin.</text>
</comment>
<comment type="subcellular location">
    <subcellularLocation>
        <location evidence="4">Secreted</location>
    </subcellularLocation>
</comment>
<comment type="tissue specificity">
    <text evidence="6">Expressed by the venom gland.</text>
</comment>
<comment type="mass spectrometry" mass="7105.0" method="MALDI" evidence="4">
    <molecule>Kunitz-type serine protease inhibitor long epsilon-dendrotoxin His55</molecule>
</comment>
<comment type="mass spectrometry" mass="6864.0" method="MALDI" evidence="4">
    <molecule>Kunitz-type serine protease inhibitor short epsilon-dendrotoxin His55</molecule>
</comment>
<comment type="similarity">
    <text evidence="5">Belongs to the venom Kunitz-type family.</text>
</comment>
<dbReference type="PIR" id="B59399">
    <property type="entry name" value="B59399"/>
</dbReference>
<dbReference type="BMRB" id="Q7LZE3"/>
<dbReference type="SMR" id="Q7LZE3"/>
<dbReference type="GO" id="GO:0005576">
    <property type="term" value="C:extracellular region"/>
    <property type="evidence" value="ECO:0007669"/>
    <property type="project" value="UniProtKB-SubCell"/>
</dbReference>
<dbReference type="GO" id="GO:0004867">
    <property type="term" value="F:serine-type endopeptidase inhibitor activity"/>
    <property type="evidence" value="ECO:0007669"/>
    <property type="project" value="UniProtKB-KW"/>
</dbReference>
<dbReference type="CDD" id="cd22595">
    <property type="entry name" value="Kunitz_dendrotoxin"/>
    <property type="match status" value="1"/>
</dbReference>
<dbReference type="FunFam" id="4.10.410.10:FF:000021">
    <property type="entry name" value="Serine protease inhibitor, putative"/>
    <property type="match status" value="1"/>
</dbReference>
<dbReference type="Gene3D" id="4.10.410.10">
    <property type="entry name" value="Pancreatic trypsin inhibitor Kunitz domain"/>
    <property type="match status" value="1"/>
</dbReference>
<dbReference type="InterPro" id="IPR002223">
    <property type="entry name" value="Kunitz_BPTI"/>
</dbReference>
<dbReference type="InterPro" id="IPR036880">
    <property type="entry name" value="Kunitz_BPTI_sf"/>
</dbReference>
<dbReference type="InterPro" id="IPR020901">
    <property type="entry name" value="Prtase_inh_Kunz-CS"/>
</dbReference>
<dbReference type="InterPro" id="IPR050098">
    <property type="entry name" value="TFPI/VKTCI-like"/>
</dbReference>
<dbReference type="PANTHER" id="PTHR10083">
    <property type="entry name" value="KUNITZ-TYPE PROTEASE INHIBITOR-RELATED"/>
    <property type="match status" value="1"/>
</dbReference>
<dbReference type="Pfam" id="PF00014">
    <property type="entry name" value="Kunitz_BPTI"/>
    <property type="match status" value="1"/>
</dbReference>
<dbReference type="PRINTS" id="PR00759">
    <property type="entry name" value="BASICPTASE"/>
</dbReference>
<dbReference type="SMART" id="SM00131">
    <property type="entry name" value="KU"/>
    <property type="match status" value="1"/>
</dbReference>
<dbReference type="SUPFAM" id="SSF57362">
    <property type="entry name" value="BPTI-like"/>
    <property type="match status" value="1"/>
</dbReference>
<dbReference type="PROSITE" id="PS00280">
    <property type="entry name" value="BPTI_KUNITZ_1"/>
    <property type="match status" value="1"/>
</dbReference>
<dbReference type="PROSITE" id="PS50279">
    <property type="entry name" value="BPTI_KUNITZ_2"/>
    <property type="match status" value="1"/>
</dbReference>
<organism>
    <name type="scientific">Dendroaspis angusticeps</name>
    <name type="common">Eastern green mamba</name>
    <name type="synonym">Naja angusticeps</name>
    <dbReference type="NCBI Taxonomy" id="8618"/>
    <lineage>
        <taxon>Eukaryota</taxon>
        <taxon>Metazoa</taxon>
        <taxon>Chordata</taxon>
        <taxon>Craniata</taxon>
        <taxon>Vertebrata</taxon>
        <taxon>Euteleostomi</taxon>
        <taxon>Lepidosauria</taxon>
        <taxon>Squamata</taxon>
        <taxon>Bifurcata</taxon>
        <taxon>Unidentata</taxon>
        <taxon>Episquamata</taxon>
        <taxon>Toxicofera</taxon>
        <taxon>Serpentes</taxon>
        <taxon>Colubroidea</taxon>
        <taxon>Elapidae</taxon>
        <taxon>Elapinae</taxon>
        <taxon>Dendroaspis</taxon>
    </lineage>
</organism>
<protein>
    <recommendedName>
        <fullName>Kunitz-type serine protease inhibitor long epsilon-dendrotoxin His55</fullName>
    </recommendedName>
    <component>
        <recommendedName>
            <fullName>Kunitz-type serine protease inhibitor short epsilon-dendrotoxin His55</fullName>
        </recommendedName>
    </component>
</protein>
<evidence type="ECO:0000250" key="1"/>
<evidence type="ECO:0000250" key="2">
    <source>
        <dbReference type="UniProtKB" id="P00984"/>
    </source>
</evidence>
<evidence type="ECO:0000255" key="3">
    <source>
        <dbReference type="PROSITE-ProRule" id="PRU00031"/>
    </source>
</evidence>
<evidence type="ECO:0000269" key="4">
    <source>
    </source>
</evidence>
<evidence type="ECO:0000305" key="5"/>
<evidence type="ECO:0000305" key="6">
    <source>
    </source>
</evidence>
<name>VKTHE_DENAN</name>
<keyword id="KW-0903">Direct protein sequencing</keyword>
<keyword id="KW-1015">Disulfide bond</keyword>
<keyword id="KW-0646">Protease inhibitor</keyword>
<keyword id="KW-0964">Secreted</keyword>
<keyword id="KW-0722">Serine protease inhibitor</keyword>
<reference key="1">
    <citation type="journal article" date="2002" name="Toxicon">
        <title>Primary structures of four trypsin inhibitor E homologs from venom of Dendroaspis angusticeps: structure-function comparisons with other dendrotoxin homologs.</title>
        <authorList>
            <person name="Sigle R."/>
            <person name="Hackett M."/>
            <person name="Aird S.D."/>
        </authorList>
    </citation>
    <scope>PROTEIN SEQUENCE</scope>
    <scope>MASS SPECTROMETRY</scope>
    <scope>SUBCELLULAR LOCATION</scope>
    <source>
        <tissue>Venom</tissue>
    </source>
</reference>